<protein>
    <recommendedName>
        <fullName evidence="1">Trigger factor</fullName>
        <shortName evidence="1">TF</shortName>
        <ecNumber evidence="1">5.2.1.8</ecNumber>
    </recommendedName>
    <alternativeName>
        <fullName evidence="1">PPIase</fullName>
    </alternativeName>
</protein>
<comment type="function">
    <text evidence="1">Involved in protein export. Acts as a chaperone by maintaining the newly synthesized protein in an open conformation. Functions as a peptidyl-prolyl cis-trans isomerase.</text>
</comment>
<comment type="catalytic activity">
    <reaction evidence="1">
        <text>[protein]-peptidylproline (omega=180) = [protein]-peptidylproline (omega=0)</text>
        <dbReference type="Rhea" id="RHEA:16237"/>
        <dbReference type="Rhea" id="RHEA-COMP:10747"/>
        <dbReference type="Rhea" id="RHEA-COMP:10748"/>
        <dbReference type="ChEBI" id="CHEBI:83833"/>
        <dbReference type="ChEBI" id="CHEBI:83834"/>
        <dbReference type="EC" id="5.2.1.8"/>
    </reaction>
</comment>
<comment type="subcellular location">
    <subcellularLocation>
        <location>Cytoplasm</location>
    </subcellularLocation>
    <text evidence="1">About half TF is bound to the ribosome near the polypeptide exit tunnel while the other half is free in the cytoplasm.</text>
</comment>
<comment type="domain">
    <text evidence="1">Consists of 3 domains; the N-terminus binds the ribosome, the middle domain has PPIase activity, while the C-terminus has intrinsic chaperone activity on its own.</text>
</comment>
<comment type="similarity">
    <text evidence="1">Belongs to the FKBP-type PPIase family. Tig subfamily.</text>
</comment>
<dbReference type="EC" id="5.2.1.8" evidence="1"/>
<dbReference type="EMBL" id="CP000107">
    <property type="protein sequence ID" value="AAZ68251.1"/>
    <property type="molecule type" value="Genomic_DNA"/>
</dbReference>
<dbReference type="RefSeq" id="WP_011304329.1">
    <property type="nucleotide sequence ID" value="NC_007354.1"/>
</dbReference>
<dbReference type="SMR" id="Q3YSQ4"/>
<dbReference type="FunCoup" id="Q3YSQ4">
    <property type="interactions" value="349"/>
</dbReference>
<dbReference type="STRING" id="269484.Ecaj_0201"/>
<dbReference type="KEGG" id="ecn:Ecaj_0201"/>
<dbReference type="eggNOG" id="COG0544">
    <property type="taxonomic scope" value="Bacteria"/>
</dbReference>
<dbReference type="HOGENOM" id="CLU_033058_2_2_5"/>
<dbReference type="InParanoid" id="Q3YSQ4"/>
<dbReference type="Proteomes" id="UP000000435">
    <property type="component" value="Chromosome"/>
</dbReference>
<dbReference type="GO" id="GO:0005737">
    <property type="term" value="C:cytoplasm"/>
    <property type="evidence" value="ECO:0007669"/>
    <property type="project" value="UniProtKB-SubCell"/>
</dbReference>
<dbReference type="GO" id="GO:0003755">
    <property type="term" value="F:peptidyl-prolyl cis-trans isomerase activity"/>
    <property type="evidence" value="ECO:0007669"/>
    <property type="project" value="UniProtKB-UniRule"/>
</dbReference>
<dbReference type="GO" id="GO:0051301">
    <property type="term" value="P:cell division"/>
    <property type="evidence" value="ECO:0007669"/>
    <property type="project" value="UniProtKB-KW"/>
</dbReference>
<dbReference type="GO" id="GO:0006457">
    <property type="term" value="P:protein folding"/>
    <property type="evidence" value="ECO:0007669"/>
    <property type="project" value="UniProtKB-UniRule"/>
</dbReference>
<dbReference type="GO" id="GO:0015031">
    <property type="term" value="P:protein transport"/>
    <property type="evidence" value="ECO:0007669"/>
    <property type="project" value="UniProtKB-UniRule"/>
</dbReference>
<dbReference type="Gene3D" id="3.10.50.40">
    <property type="match status" value="1"/>
</dbReference>
<dbReference type="Gene3D" id="3.30.70.1050">
    <property type="entry name" value="Trigger factor ribosome-binding domain"/>
    <property type="match status" value="1"/>
</dbReference>
<dbReference type="Gene3D" id="1.10.3120.10">
    <property type="entry name" value="Trigger factor, C-terminal domain"/>
    <property type="match status" value="1"/>
</dbReference>
<dbReference type="HAMAP" id="MF_00303">
    <property type="entry name" value="Trigger_factor_Tig"/>
    <property type="match status" value="1"/>
</dbReference>
<dbReference type="InterPro" id="IPR046357">
    <property type="entry name" value="PPIase_dom_sf"/>
</dbReference>
<dbReference type="InterPro" id="IPR001179">
    <property type="entry name" value="PPIase_FKBP_dom"/>
</dbReference>
<dbReference type="InterPro" id="IPR005215">
    <property type="entry name" value="Trig_fac"/>
</dbReference>
<dbReference type="InterPro" id="IPR008880">
    <property type="entry name" value="Trigger_fac_C"/>
</dbReference>
<dbReference type="InterPro" id="IPR037041">
    <property type="entry name" value="Trigger_fac_C_sf"/>
</dbReference>
<dbReference type="InterPro" id="IPR008881">
    <property type="entry name" value="Trigger_fac_ribosome-bd_bac"/>
</dbReference>
<dbReference type="InterPro" id="IPR036611">
    <property type="entry name" value="Trigger_fac_ribosome-bd_sf"/>
</dbReference>
<dbReference type="InterPro" id="IPR027304">
    <property type="entry name" value="Trigger_fact/SurA_dom_sf"/>
</dbReference>
<dbReference type="NCBIfam" id="TIGR00115">
    <property type="entry name" value="tig"/>
    <property type="match status" value="1"/>
</dbReference>
<dbReference type="Pfam" id="PF00254">
    <property type="entry name" value="FKBP_C"/>
    <property type="match status" value="1"/>
</dbReference>
<dbReference type="Pfam" id="PF05698">
    <property type="entry name" value="Trigger_C"/>
    <property type="match status" value="1"/>
</dbReference>
<dbReference type="Pfam" id="PF05697">
    <property type="entry name" value="Trigger_N"/>
    <property type="match status" value="1"/>
</dbReference>
<dbReference type="PIRSF" id="PIRSF003095">
    <property type="entry name" value="Trigger_factor"/>
    <property type="match status" value="1"/>
</dbReference>
<dbReference type="SUPFAM" id="SSF54534">
    <property type="entry name" value="FKBP-like"/>
    <property type="match status" value="1"/>
</dbReference>
<dbReference type="SUPFAM" id="SSF109998">
    <property type="entry name" value="Triger factor/SurA peptide-binding domain-like"/>
    <property type="match status" value="1"/>
</dbReference>
<dbReference type="SUPFAM" id="SSF102735">
    <property type="entry name" value="Trigger factor ribosome-binding domain"/>
    <property type="match status" value="1"/>
</dbReference>
<dbReference type="PROSITE" id="PS50059">
    <property type="entry name" value="FKBP_PPIASE"/>
    <property type="match status" value="1"/>
</dbReference>
<reference key="1">
    <citation type="journal article" date="2006" name="J. Bacteriol.">
        <title>The genome of the obligately intracellular bacterium Ehrlichia canis reveals themes of complex membrane structure and immune evasion strategies.</title>
        <authorList>
            <person name="Mavromatis K."/>
            <person name="Doyle C.K."/>
            <person name="Lykidis A."/>
            <person name="Ivanova N."/>
            <person name="Francino M.P."/>
            <person name="Chain P."/>
            <person name="Shin M."/>
            <person name="Malfatti S."/>
            <person name="Larimer F."/>
            <person name="Copeland A."/>
            <person name="Detter J.C."/>
            <person name="Land M."/>
            <person name="Richardson P.M."/>
            <person name="Yu X.J."/>
            <person name="Walker D.H."/>
            <person name="McBride J.W."/>
            <person name="Kyrpides N.C."/>
        </authorList>
    </citation>
    <scope>NUCLEOTIDE SEQUENCE [LARGE SCALE GENOMIC DNA]</scope>
    <source>
        <strain>Jake</strain>
    </source>
</reference>
<proteinExistence type="inferred from homology"/>
<keyword id="KW-0131">Cell cycle</keyword>
<keyword id="KW-0132">Cell division</keyword>
<keyword id="KW-0143">Chaperone</keyword>
<keyword id="KW-0963">Cytoplasm</keyword>
<keyword id="KW-0413">Isomerase</keyword>
<keyword id="KW-0697">Rotamase</keyword>
<accession>Q3YSQ4</accession>
<name>TIG_EHRCJ</name>
<feature type="chain" id="PRO_0000256556" description="Trigger factor">
    <location>
        <begin position="1"/>
        <end position="440"/>
    </location>
</feature>
<feature type="domain" description="PPIase FKBP-type" evidence="1">
    <location>
        <begin position="176"/>
        <end position="261"/>
    </location>
</feature>
<organism>
    <name type="scientific">Ehrlichia canis (strain Jake)</name>
    <dbReference type="NCBI Taxonomy" id="269484"/>
    <lineage>
        <taxon>Bacteria</taxon>
        <taxon>Pseudomonadati</taxon>
        <taxon>Pseudomonadota</taxon>
        <taxon>Alphaproteobacteria</taxon>
        <taxon>Rickettsiales</taxon>
        <taxon>Anaplasmataceae</taxon>
        <taxon>Ehrlichia</taxon>
    </lineage>
</organism>
<gene>
    <name evidence="1" type="primary">tig</name>
    <name type="ordered locus">Ecaj_0201</name>
</gene>
<sequence length="440" mass="50401">MLDCYVVKEVSNDKLKWEYEFVIDKKYFLDQLDSKLSEIAKNVKVPGFRVGKASIDLVKKEYLNDVMTDVVRKTIESTSSDFVKSNKFGEIISSNIDIVSYPNYYSDNDSKEENLVYKLSFEVMPEAPLMDIDSIVLNGIEVDIQESDVSEFIENLKKQRPNFIVVNGAEYAVQEGDKVVIDYQNKVKGKILRGGSAKDFALVIGKGVALKEFENQLLGMRVGETKSFPLTFPDDYSVAYLAGKTTDMSVVVKSIYVVKDVQDNESVARSYGFKDVAEMENFVRKQIGQQFDQMVLTIMKKELFDYMDNTYSIDVPECVVKQEITKINKEILDSGEDIQIDVEKEAVRRVKLGMLLIRMSRHNNITIKNEDVLSFIKNNYTDYGVDINNVLKMLQSNKNFANYISGKVLEDKVINYIIKLVKKDRKVMTTKEINLMFENI</sequence>
<evidence type="ECO:0000255" key="1">
    <source>
        <dbReference type="HAMAP-Rule" id="MF_00303"/>
    </source>
</evidence>